<evidence type="ECO:0000255" key="1">
    <source>
        <dbReference type="HAMAP-Rule" id="MF_00686"/>
    </source>
</evidence>
<accession>Q3KJJ3</accession>
<reference key="1">
    <citation type="journal article" date="2009" name="Genome Biol.">
        <title>Genomic and genetic analyses of diversity and plant interactions of Pseudomonas fluorescens.</title>
        <authorList>
            <person name="Silby M.W."/>
            <person name="Cerdeno-Tarraga A.M."/>
            <person name="Vernikos G.S."/>
            <person name="Giddens S.R."/>
            <person name="Jackson R.W."/>
            <person name="Preston G.M."/>
            <person name="Zhang X.-X."/>
            <person name="Moon C.D."/>
            <person name="Gehrig S.M."/>
            <person name="Godfrey S.A.C."/>
            <person name="Knight C.G."/>
            <person name="Malone J.G."/>
            <person name="Robinson Z."/>
            <person name="Spiers A.J."/>
            <person name="Harris S."/>
            <person name="Challis G.L."/>
            <person name="Yaxley A.M."/>
            <person name="Harris D."/>
            <person name="Seeger K."/>
            <person name="Murphy L."/>
            <person name="Rutter S."/>
            <person name="Squares R."/>
            <person name="Quail M.A."/>
            <person name="Saunders E."/>
            <person name="Mavromatis K."/>
            <person name="Brettin T.S."/>
            <person name="Bentley S.D."/>
            <person name="Hothersall J."/>
            <person name="Stephens E."/>
            <person name="Thomas C.M."/>
            <person name="Parkhill J."/>
            <person name="Levy S.B."/>
            <person name="Rainey P.B."/>
            <person name="Thomson N.R."/>
        </authorList>
    </citation>
    <scope>NUCLEOTIDE SEQUENCE [LARGE SCALE GENOMIC DNA]</scope>
    <source>
        <strain>Pf0-1</strain>
    </source>
</reference>
<proteinExistence type="inferred from homology"/>
<gene>
    <name type="ordered locus">Pfl01_0319</name>
</gene>
<dbReference type="EMBL" id="CP000094">
    <property type="protein sequence ID" value="ABA72063.1"/>
    <property type="molecule type" value="Genomic_DNA"/>
</dbReference>
<dbReference type="RefSeq" id="WP_007952551.1">
    <property type="nucleotide sequence ID" value="NC_007492.2"/>
</dbReference>
<dbReference type="SMR" id="Q3KJJ3"/>
<dbReference type="KEGG" id="pfo:Pfl01_0319"/>
<dbReference type="eggNOG" id="COG2924">
    <property type="taxonomic scope" value="Bacteria"/>
</dbReference>
<dbReference type="HOGENOM" id="CLU_170994_0_0_6"/>
<dbReference type="Proteomes" id="UP000002704">
    <property type="component" value="Chromosome"/>
</dbReference>
<dbReference type="GO" id="GO:0005829">
    <property type="term" value="C:cytosol"/>
    <property type="evidence" value="ECO:0007669"/>
    <property type="project" value="TreeGrafter"/>
</dbReference>
<dbReference type="GO" id="GO:0005506">
    <property type="term" value="F:iron ion binding"/>
    <property type="evidence" value="ECO:0007669"/>
    <property type="project" value="UniProtKB-UniRule"/>
</dbReference>
<dbReference type="GO" id="GO:0034599">
    <property type="term" value="P:cellular response to oxidative stress"/>
    <property type="evidence" value="ECO:0007669"/>
    <property type="project" value="TreeGrafter"/>
</dbReference>
<dbReference type="FunFam" id="1.10.3880.10:FF:000001">
    <property type="entry name" value="Probable Fe(2+)-trafficking protein"/>
    <property type="match status" value="1"/>
</dbReference>
<dbReference type="Gene3D" id="1.10.3880.10">
    <property type="entry name" value="Fe(II) trafficking protein YggX"/>
    <property type="match status" value="1"/>
</dbReference>
<dbReference type="HAMAP" id="MF_00686">
    <property type="entry name" value="Fe_traffic_YggX"/>
    <property type="match status" value="1"/>
</dbReference>
<dbReference type="InterPro" id="IPR007457">
    <property type="entry name" value="Fe_traffick_prot_YggX"/>
</dbReference>
<dbReference type="InterPro" id="IPR036766">
    <property type="entry name" value="Fe_traffick_prot_YggX_sf"/>
</dbReference>
<dbReference type="NCBIfam" id="NF003817">
    <property type="entry name" value="PRK05408.1"/>
    <property type="match status" value="1"/>
</dbReference>
<dbReference type="PANTHER" id="PTHR36965">
    <property type="entry name" value="FE(2+)-TRAFFICKING PROTEIN-RELATED"/>
    <property type="match status" value="1"/>
</dbReference>
<dbReference type="PANTHER" id="PTHR36965:SF1">
    <property type="entry name" value="FE(2+)-TRAFFICKING PROTEIN-RELATED"/>
    <property type="match status" value="1"/>
</dbReference>
<dbReference type="Pfam" id="PF04362">
    <property type="entry name" value="Iron_traffic"/>
    <property type="match status" value="1"/>
</dbReference>
<dbReference type="PIRSF" id="PIRSF029827">
    <property type="entry name" value="Fe_traffic_YggX"/>
    <property type="match status" value="1"/>
</dbReference>
<dbReference type="SUPFAM" id="SSF111148">
    <property type="entry name" value="YggX-like"/>
    <property type="match status" value="1"/>
</dbReference>
<sequence>MTRTVMCRKYKEQLEGLERPPYPGAKGQDIFEHVSAKAWADWQKHQTLLINEKRLNMMNAEDRKFLQGEMDKYFSGEEYAQAEGYVPPAE</sequence>
<comment type="function">
    <text evidence="1">Could be a mediator in iron transactions between iron acquisition and iron-requiring processes, such as synthesis and/or repair of Fe-S clusters in biosynthetic enzymes.</text>
</comment>
<comment type="similarity">
    <text evidence="1">Belongs to the Fe(2+)-trafficking protein family.</text>
</comment>
<organism>
    <name type="scientific">Pseudomonas fluorescens (strain Pf0-1)</name>
    <dbReference type="NCBI Taxonomy" id="205922"/>
    <lineage>
        <taxon>Bacteria</taxon>
        <taxon>Pseudomonadati</taxon>
        <taxon>Pseudomonadota</taxon>
        <taxon>Gammaproteobacteria</taxon>
        <taxon>Pseudomonadales</taxon>
        <taxon>Pseudomonadaceae</taxon>
        <taxon>Pseudomonas</taxon>
    </lineage>
</organism>
<feature type="chain" id="PRO_0000246107" description="Probable Fe(2+)-trafficking protein">
    <location>
        <begin position="1"/>
        <end position="90"/>
    </location>
</feature>
<protein>
    <recommendedName>
        <fullName evidence="1">Probable Fe(2+)-trafficking protein</fullName>
    </recommendedName>
</protein>
<name>FETP_PSEPF</name>
<keyword id="KW-0408">Iron</keyword>